<sequence>MEVTPNHTQTVSGWAAMDESGKIVPFVFKRRENGVDDVTIKVKYCGMCHTDLHFIHNDWGITMYPVVPGHEITGVVTKVGTNVAGFKVGDRVGVGCIAASCLDCEHCRRSEENYCDKVALTYNGIFWDGSITYGGYSGMLVAHKRFVVRIPDTLPLDAAAPLLCAGITVYSPMKQHGMLQADAAGRRLGVVGLGGLGHVAVKFGKAFGLHVTVISTSPAKEREARENLKADNFVVSTDQKQMQAMTRSLDYIIDTVAATHSLGPILELLKVNGKLVLVGAPEKPVELPSFPLIFGKRTVSGSMTGGMKETQEMMDICGEHNITCDIEIVSTDRINDALARLARNDVRYRFVINVGGDSKL</sequence>
<keyword id="KW-0438">Lignin biosynthesis</keyword>
<keyword id="KW-0479">Metal-binding</keyword>
<keyword id="KW-0521">NADP</keyword>
<keyword id="KW-0560">Oxidoreductase</keyword>
<keyword id="KW-1185">Reference proteome</keyword>
<keyword id="KW-0862">Zinc</keyword>
<dbReference type="EC" id="1.1.1.195" evidence="1"/>
<dbReference type="EMBL" id="AL731598">
    <property type="protein sequence ID" value="CAD39904.2"/>
    <property type="molecule type" value="Genomic_DNA"/>
</dbReference>
<dbReference type="EMBL" id="AP008210">
    <property type="protein sequence ID" value="BAF14204.1"/>
    <property type="molecule type" value="Genomic_DNA"/>
</dbReference>
<dbReference type="EMBL" id="AP014960">
    <property type="protein sequence ID" value="BAS88222.1"/>
    <property type="molecule type" value="Genomic_DNA"/>
</dbReference>
<dbReference type="EMBL" id="AK071484">
    <property type="protein sequence ID" value="BAG92519.1"/>
    <property type="molecule type" value="mRNA"/>
</dbReference>
<dbReference type="EMBL" id="AK099270">
    <property type="protein sequence ID" value="BAG94032.1"/>
    <property type="molecule type" value="mRNA"/>
</dbReference>
<dbReference type="RefSeq" id="XP_015634191.1">
    <property type="nucleotide sequence ID" value="XM_015778705.1"/>
</dbReference>
<dbReference type="SMR" id="Q7XWU3"/>
<dbReference type="FunCoup" id="Q7XWU3">
    <property type="interactions" value="172"/>
</dbReference>
<dbReference type="STRING" id="39947.Q7XWU3"/>
<dbReference type="PaxDb" id="39947-Q7XWU3"/>
<dbReference type="EnsemblPlants" id="Os04t0229100-01">
    <property type="protein sequence ID" value="Os04t0229100-01"/>
    <property type="gene ID" value="Os04g0229100"/>
</dbReference>
<dbReference type="Gramene" id="Os04t0229100-01">
    <property type="protein sequence ID" value="Os04t0229100-01"/>
    <property type="gene ID" value="Os04g0229100"/>
</dbReference>
<dbReference type="KEGG" id="dosa:Os04g0229100"/>
<dbReference type="eggNOG" id="KOG0023">
    <property type="taxonomic scope" value="Eukaryota"/>
</dbReference>
<dbReference type="HOGENOM" id="CLU_026673_20_2_1"/>
<dbReference type="InParanoid" id="Q7XWU3"/>
<dbReference type="OMA" id="MEWGQFE"/>
<dbReference type="OrthoDB" id="1879366at2759"/>
<dbReference type="BRENDA" id="1.1.1.195">
    <property type="organism ID" value="8948"/>
</dbReference>
<dbReference type="UniPathway" id="UPA00711"/>
<dbReference type="Proteomes" id="UP000000763">
    <property type="component" value="Chromosome 4"/>
</dbReference>
<dbReference type="Proteomes" id="UP000059680">
    <property type="component" value="Chromosome 4"/>
</dbReference>
<dbReference type="GO" id="GO:0045551">
    <property type="term" value="F:cinnamyl-alcohol dehydrogenase activity"/>
    <property type="evidence" value="ECO:0000318"/>
    <property type="project" value="GO_Central"/>
</dbReference>
<dbReference type="GO" id="GO:0050268">
    <property type="term" value="F:coniferyl-alcohol dehydrogenase activity"/>
    <property type="evidence" value="ECO:0007669"/>
    <property type="project" value="RHEA"/>
</dbReference>
<dbReference type="GO" id="GO:0008270">
    <property type="term" value="F:zinc ion binding"/>
    <property type="evidence" value="ECO:0007669"/>
    <property type="project" value="InterPro"/>
</dbReference>
<dbReference type="GO" id="GO:0009809">
    <property type="term" value="P:lignin biosynthetic process"/>
    <property type="evidence" value="ECO:0000318"/>
    <property type="project" value="GO_Central"/>
</dbReference>
<dbReference type="CDD" id="cd05283">
    <property type="entry name" value="CAD1"/>
    <property type="match status" value="1"/>
</dbReference>
<dbReference type="FunFam" id="3.40.50.720:FF:000022">
    <property type="entry name" value="Cinnamyl alcohol dehydrogenase"/>
    <property type="match status" value="1"/>
</dbReference>
<dbReference type="FunFam" id="3.90.180.10:FF:000004">
    <property type="entry name" value="probable cinnamyl alcohol dehydrogenase"/>
    <property type="match status" value="1"/>
</dbReference>
<dbReference type="Gene3D" id="3.90.180.10">
    <property type="entry name" value="Medium-chain alcohol dehydrogenases, catalytic domain"/>
    <property type="match status" value="1"/>
</dbReference>
<dbReference type="Gene3D" id="3.40.50.720">
    <property type="entry name" value="NAD(P)-binding Rossmann-like Domain"/>
    <property type="match status" value="1"/>
</dbReference>
<dbReference type="InterPro" id="IPR013149">
    <property type="entry name" value="ADH-like_C"/>
</dbReference>
<dbReference type="InterPro" id="IPR013154">
    <property type="entry name" value="ADH-like_N"/>
</dbReference>
<dbReference type="InterPro" id="IPR002328">
    <property type="entry name" value="ADH_Zn_CS"/>
</dbReference>
<dbReference type="InterPro" id="IPR047109">
    <property type="entry name" value="CAD-like"/>
</dbReference>
<dbReference type="InterPro" id="IPR011032">
    <property type="entry name" value="GroES-like_sf"/>
</dbReference>
<dbReference type="InterPro" id="IPR036291">
    <property type="entry name" value="NAD(P)-bd_dom_sf"/>
</dbReference>
<dbReference type="InterPro" id="IPR020843">
    <property type="entry name" value="PKS_ER"/>
</dbReference>
<dbReference type="PANTHER" id="PTHR42683">
    <property type="entry name" value="ALDEHYDE REDUCTASE"/>
    <property type="match status" value="1"/>
</dbReference>
<dbReference type="Pfam" id="PF08240">
    <property type="entry name" value="ADH_N"/>
    <property type="match status" value="1"/>
</dbReference>
<dbReference type="Pfam" id="PF00107">
    <property type="entry name" value="ADH_zinc_N"/>
    <property type="match status" value="1"/>
</dbReference>
<dbReference type="SMART" id="SM00829">
    <property type="entry name" value="PKS_ER"/>
    <property type="match status" value="1"/>
</dbReference>
<dbReference type="SUPFAM" id="SSF50129">
    <property type="entry name" value="GroES-like"/>
    <property type="match status" value="1"/>
</dbReference>
<dbReference type="SUPFAM" id="SSF51735">
    <property type="entry name" value="NAD(P)-binding Rossmann-fold domains"/>
    <property type="match status" value="1"/>
</dbReference>
<dbReference type="PROSITE" id="PS00059">
    <property type="entry name" value="ADH_ZINC"/>
    <property type="match status" value="1"/>
</dbReference>
<evidence type="ECO:0000250" key="1">
    <source>
        <dbReference type="UniProtKB" id="O49482"/>
    </source>
</evidence>
<evidence type="ECO:0000303" key="2">
    <source>
    </source>
</evidence>
<evidence type="ECO:0000305" key="3"/>
<gene>
    <name evidence="2" type="primary">CAD6</name>
    <name type="ordered locus">Os04g0229100</name>
    <name type="ordered locus">LOC_Os04g15920</name>
    <name type="ORF">OSJNBa0065B15.8</name>
</gene>
<name>CADH6_ORYSJ</name>
<accession>Q7XWU3</accession>
<accession>A0A0P0W820</accession>
<comment type="function">
    <text evidence="1">Involved in lignin biosynthesis. Catalyzes the final step specific for the production of lignin monomers. Catalyzes the NADPH-dependent reduction of coniferaldehyde, 5-hydroxyconiferaldehyde, sinapaldehyde, 4-coumaraldehyde and caffeyl aldehyde to their respective alcohols.</text>
</comment>
<comment type="catalytic activity">
    <reaction evidence="1">
        <text>(E)-cinnamyl alcohol + NADP(+) = (E)-cinnamaldehyde + NADPH + H(+)</text>
        <dbReference type="Rhea" id="RHEA:10392"/>
        <dbReference type="ChEBI" id="CHEBI:15378"/>
        <dbReference type="ChEBI" id="CHEBI:16731"/>
        <dbReference type="ChEBI" id="CHEBI:33227"/>
        <dbReference type="ChEBI" id="CHEBI:57783"/>
        <dbReference type="ChEBI" id="CHEBI:58349"/>
        <dbReference type="EC" id="1.1.1.195"/>
    </reaction>
    <physiologicalReaction direction="right-to-left" evidence="1">
        <dbReference type="Rhea" id="RHEA:10394"/>
    </physiologicalReaction>
</comment>
<comment type="catalytic activity">
    <reaction evidence="1">
        <text>(E)-coniferol + NADP(+) = (E)-coniferaldehyde + NADPH + H(+)</text>
        <dbReference type="Rhea" id="RHEA:22444"/>
        <dbReference type="ChEBI" id="CHEBI:15378"/>
        <dbReference type="ChEBI" id="CHEBI:16547"/>
        <dbReference type="ChEBI" id="CHEBI:17745"/>
        <dbReference type="ChEBI" id="CHEBI:57783"/>
        <dbReference type="ChEBI" id="CHEBI:58349"/>
        <dbReference type="EC" id="1.1.1.195"/>
    </reaction>
    <physiologicalReaction direction="right-to-left" evidence="1">
        <dbReference type="Rhea" id="RHEA:22446"/>
    </physiologicalReaction>
</comment>
<comment type="catalytic activity">
    <reaction evidence="1">
        <text>(E)-sinapyl alcohol + NADP(+) = (E)-sinapaldehyde + NADPH + H(+)</text>
        <dbReference type="Rhea" id="RHEA:45704"/>
        <dbReference type="ChEBI" id="CHEBI:15378"/>
        <dbReference type="ChEBI" id="CHEBI:27949"/>
        <dbReference type="ChEBI" id="CHEBI:57783"/>
        <dbReference type="ChEBI" id="CHEBI:58349"/>
        <dbReference type="ChEBI" id="CHEBI:64557"/>
        <dbReference type="EC" id="1.1.1.195"/>
    </reaction>
    <physiologicalReaction direction="right-to-left" evidence="1">
        <dbReference type="Rhea" id="RHEA:45706"/>
    </physiologicalReaction>
</comment>
<comment type="catalytic activity">
    <reaction evidence="1">
        <text>(E)-4-coumaroyl alcohol + NADP(+) = (E)-4-coumaraldehyde + NADPH + H(+)</text>
        <dbReference type="Rhea" id="RHEA:45724"/>
        <dbReference type="ChEBI" id="CHEBI:15378"/>
        <dbReference type="ChEBI" id="CHEBI:28353"/>
        <dbReference type="ChEBI" id="CHEBI:57783"/>
        <dbReference type="ChEBI" id="CHEBI:58349"/>
        <dbReference type="ChEBI" id="CHEBI:64555"/>
        <dbReference type="EC" id="1.1.1.195"/>
    </reaction>
    <physiologicalReaction direction="right-to-left" evidence="1">
        <dbReference type="Rhea" id="RHEA:45726"/>
    </physiologicalReaction>
</comment>
<comment type="catalytic activity">
    <reaction evidence="1">
        <text>(E)-caffeyl alcohol + NADP(+) = (E)-caffeyl aldehyde + NADPH + H(+)</text>
        <dbReference type="Rhea" id="RHEA:45728"/>
        <dbReference type="ChEBI" id="CHEBI:15378"/>
        <dbReference type="ChEBI" id="CHEBI:28323"/>
        <dbReference type="ChEBI" id="CHEBI:31334"/>
        <dbReference type="ChEBI" id="CHEBI:57783"/>
        <dbReference type="ChEBI" id="CHEBI:58349"/>
    </reaction>
    <physiologicalReaction direction="right-to-left" evidence="1">
        <dbReference type="Rhea" id="RHEA:45730"/>
    </physiologicalReaction>
</comment>
<comment type="cofactor">
    <cofactor evidence="1">
        <name>Zn(2+)</name>
        <dbReference type="ChEBI" id="CHEBI:29105"/>
    </cofactor>
    <text evidence="1">Binds 2 Zn(2+) ions per subunit.</text>
</comment>
<comment type="pathway">
    <text evidence="1">Aromatic compound metabolism; phenylpropanoid biosynthesis.</text>
</comment>
<comment type="subunit">
    <text evidence="1">Homodimer.</text>
</comment>
<comment type="similarity">
    <text evidence="3">Belongs to the zinc-containing alcohol dehydrogenase family.</text>
</comment>
<proteinExistence type="evidence at transcript level"/>
<reference key="1">
    <citation type="journal article" date="2002" name="Nature">
        <title>Sequence and analysis of rice chromosome 4.</title>
        <authorList>
            <person name="Feng Q."/>
            <person name="Zhang Y."/>
            <person name="Hao P."/>
            <person name="Wang S."/>
            <person name="Fu G."/>
            <person name="Huang Y."/>
            <person name="Li Y."/>
            <person name="Zhu J."/>
            <person name="Liu Y."/>
            <person name="Hu X."/>
            <person name="Jia P."/>
            <person name="Zhang Y."/>
            <person name="Zhao Q."/>
            <person name="Ying K."/>
            <person name="Yu S."/>
            <person name="Tang Y."/>
            <person name="Weng Q."/>
            <person name="Zhang L."/>
            <person name="Lu Y."/>
            <person name="Mu J."/>
            <person name="Lu Y."/>
            <person name="Zhang L.S."/>
            <person name="Yu Z."/>
            <person name="Fan D."/>
            <person name="Liu X."/>
            <person name="Lu T."/>
            <person name="Li C."/>
            <person name="Wu Y."/>
            <person name="Sun T."/>
            <person name="Lei H."/>
            <person name="Li T."/>
            <person name="Hu H."/>
            <person name="Guan J."/>
            <person name="Wu M."/>
            <person name="Zhang R."/>
            <person name="Zhou B."/>
            <person name="Chen Z."/>
            <person name="Chen L."/>
            <person name="Jin Z."/>
            <person name="Wang R."/>
            <person name="Yin H."/>
            <person name="Cai Z."/>
            <person name="Ren S."/>
            <person name="Lv G."/>
            <person name="Gu W."/>
            <person name="Zhu G."/>
            <person name="Tu Y."/>
            <person name="Jia J."/>
            <person name="Zhang Y."/>
            <person name="Chen J."/>
            <person name="Kang H."/>
            <person name="Chen X."/>
            <person name="Shao C."/>
            <person name="Sun Y."/>
            <person name="Hu Q."/>
            <person name="Zhang X."/>
            <person name="Zhang W."/>
            <person name="Wang L."/>
            <person name="Ding C."/>
            <person name="Sheng H."/>
            <person name="Gu J."/>
            <person name="Chen S."/>
            <person name="Ni L."/>
            <person name="Zhu F."/>
            <person name="Chen W."/>
            <person name="Lan L."/>
            <person name="Lai Y."/>
            <person name="Cheng Z."/>
            <person name="Gu M."/>
            <person name="Jiang J."/>
            <person name="Li J."/>
            <person name="Hong G."/>
            <person name="Xue Y."/>
            <person name="Han B."/>
        </authorList>
    </citation>
    <scope>NUCLEOTIDE SEQUENCE [LARGE SCALE GENOMIC DNA]</scope>
    <source>
        <strain>cv. Nipponbare</strain>
    </source>
</reference>
<reference key="2">
    <citation type="journal article" date="2005" name="Nature">
        <title>The map-based sequence of the rice genome.</title>
        <authorList>
            <consortium name="International rice genome sequencing project (IRGSP)"/>
        </authorList>
    </citation>
    <scope>NUCLEOTIDE SEQUENCE [LARGE SCALE GENOMIC DNA]</scope>
    <source>
        <strain>cv. Nipponbare</strain>
    </source>
</reference>
<reference key="3">
    <citation type="journal article" date="2008" name="Nucleic Acids Res.">
        <title>The rice annotation project database (RAP-DB): 2008 update.</title>
        <authorList>
            <consortium name="The rice annotation project (RAP)"/>
        </authorList>
    </citation>
    <scope>GENOME REANNOTATION</scope>
    <source>
        <strain>cv. Nipponbare</strain>
    </source>
</reference>
<reference key="4">
    <citation type="journal article" date="2013" name="Rice">
        <title>Improvement of the Oryza sativa Nipponbare reference genome using next generation sequence and optical map data.</title>
        <authorList>
            <person name="Kawahara Y."/>
            <person name="de la Bastide M."/>
            <person name="Hamilton J.P."/>
            <person name="Kanamori H."/>
            <person name="McCombie W.R."/>
            <person name="Ouyang S."/>
            <person name="Schwartz D.C."/>
            <person name="Tanaka T."/>
            <person name="Wu J."/>
            <person name="Zhou S."/>
            <person name="Childs K.L."/>
            <person name="Davidson R.M."/>
            <person name="Lin H."/>
            <person name="Quesada-Ocampo L."/>
            <person name="Vaillancourt B."/>
            <person name="Sakai H."/>
            <person name="Lee S.S."/>
            <person name="Kim J."/>
            <person name="Numa H."/>
            <person name="Itoh T."/>
            <person name="Buell C.R."/>
            <person name="Matsumoto T."/>
        </authorList>
    </citation>
    <scope>GENOME REANNOTATION</scope>
    <source>
        <strain>cv. Nipponbare</strain>
    </source>
</reference>
<reference key="5">
    <citation type="journal article" date="2003" name="Science">
        <title>Collection, mapping, and annotation of over 28,000 cDNA clones from japonica rice.</title>
        <authorList>
            <consortium name="The rice full-length cDNA consortium"/>
        </authorList>
    </citation>
    <scope>NUCLEOTIDE SEQUENCE [LARGE SCALE MRNA]</scope>
    <source>
        <strain>cv. Nipponbare</strain>
    </source>
</reference>
<reference key="6">
    <citation type="journal article" date="2005" name="Planta">
        <title>Structure of the cinnamyl-alcohol dehydrogenase gene family in rice and promoter activity of a member associated with lignification.</title>
        <authorList>
            <person name="Tobias C.M."/>
            <person name="Chow E.K."/>
        </authorList>
    </citation>
    <scope>GENE FAMILY</scope>
    <scope>NOMENCLATURE</scope>
</reference>
<organism>
    <name type="scientific">Oryza sativa subsp. japonica</name>
    <name type="common">Rice</name>
    <dbReference type="NCBI Taxonomy" id="39947"/>
    <lineage>
        <taxon>Eukaryota</taxon>
        <taxon>Viridiplantae</taxon>
        <taxon>Streptophyta</taxon>
        <taxon>Embryophyta</taxon>
        <taxon>Tracheophyta</taxon>
        <taxon>Spermatophyta</taxon>
        <taxon>Magnoliopsida</taxon>
        <taxon>Liliopsida</taxon>
        <taxon>Poales</taxon>
        <taxon>Poaceae</taxon>
        <taxon>BOP clade</taxon>
        <taxon>Oryzoideae</taxon>
        <taxon>Oryzeae</taxon>
        <taxon>Oryzinae</taxon>
        <taxon>Oryza</taxon>
        <taxon>Oryza sativa</taxon>
    </lineage>
</organism>
<protein>
    <recommendedName>
        <fullName evidence="3">Probable cinnamyl alcohol dehydrogenase 6</fullName>
        <shortName evidence="2">OsCAD6</shortName>
        <ecNumber evidence="1">1.1.1.195</ecNumber>
    </recommendedName>
</protein>
<feature type="chain" id="PRO_0000382645" description="Probable cinnamyl alcohol dehydrogenase 6">
    <location>
        <begin position="1"/>
        <end position="360"/>
    </location>
</feature>
<feature type="binding site" evidence="1">
    <location>
        <position position="48"/>
    </location>
    <ligand>
        <name>Zn(2+)</name>
        <dbReference type="ChEBI" id="CHEBI:29105"/>
        <label>1</label>
        <note>catalytic</note>
    </ligand>
</feature>
<feature type="binding site" evidence="1">
    <location>
        <position position="50"/>
    </location>
    <ligand>
        <name>NADP(+)</name>
        <dbReference type="ChEBI" id="CHEBI:58349"/>
    </ligand>
</feature>
<feature type="binding site" evidence="1">
    <location>
        <position position="70"/>
    </location>
    <ligand>
        <name>Zn(2+)</name>
        <dbReference type="ChEBI" id="CHEBI:29105"/>
        <label>1</label>
        <note>catalytic</note>
    </ligand>
</feature>
<feature type="binding site" evidence="1">
    <location>
        <position position="71"/>
    </location>
    <ligand>
        <name>Zn(2+)</name>
        <dbReference type="ChEBI" id="CHEBI:29105"/>
        <label>1</label>
        <note>catalytic</note>
    </ligand>
</feature>
<feature type="binding site" evidence="1">
    <location>
        <position position="101"/>
    </location>
    <ligand>
        <name>Zn(2+)</name>
        <dbReference type="ChEBI" id="CHEBI:29105"/>
        <label>2</label>
    </ligand>
</feature>
<feature type="binding site" evidence="1">
    <location>
        <position position="104"/>
    </location>
    <ligand>
        <name>Zn(2+)</name>
        <dbReference type="ChEBI" id="CHEBI:29105"/>
        <label>2</label>
    </ligand>
</feature>
<feature type="binding site" evidence="1">
    <location>
        <position position="107"/>
    </location>
    <ligand>
        <name>Zn(2+)</name>
        <dbReference type="ChEBI" id="CHEBI:29105"/>
        <label>2</label>
    </ligand>
</feature>
<feature type="binding site" evidence="1">
    <location>
        <position position="115"/>
    </location>
    <ligand>
        <name>Zn(2+)</name>
        <dbReference type="ChEBI" id="CHEBI:29105"/>
        <label>2</label>
    </ligand>
</feature>
<feature type="binding site" evidence="1">
    <location>
        <position position="164"/>
    </location>
    <ligand>
        <name>Zn(2+)</name>
        <dbReference type="ChEBI" id="CHEBI:29105"/>
        <label>1</label>
        <note>catalytic</note>
    </ligand>
</feature>
<feature type="binding site" evidence="1">
    <location>
        <position position="168"/>
    </location>
    <ligand>
        <name>NADP(+)</name>
        <dbReference type="ChEBI" id="CHEBI:58349"/>
    </ligand>
</feature>
<feature type="binding site" evidence="1">
    <location>
        <begin position="192"/>
        <end position="197"/>
    </location>
    <ligand>
        <name>NADP(+)</name>
        <dbReference type="ChEBI" id="CHEBI:58349"/>
    </ligand>
</feature>
<feature type="binding site" evidence="1">
    <location>
        <begin position="215"/>
        <end position="220"/>
    </location>
    <ligand>
        <name>NADP(+)</name>
        <dbReference type="ChEBI" id="CHEBI:58349"/>
    </ligand>
</feature>
<feature type="binding site" evidence="1">
    <location>
        <position position="255"/>
    </location>
    <ligand>
        <name>NADP(+)</name>
        <dbReference type="ChEBI" id="CHEBI:58349"/>
    </ligand>
</feature>
<feature type="binding site" evidence="1">
    <location>
        <position position="279"/>
    </location>
    <ligand>
        <name>NADP(+)</name>
        <dbReference type="ChEBI" id="CHEBI:58349"/>
    </ligand>
</feature>
<feature type="binding site" evidence="1">
    <location>
        <begin position="302"/>
        <end position="304"/>
    </location>
    <ligand>
        <name>NADP(+)</name>
        <dbReference type="ChEBI" id="CHEBI:58349"/>
    </ligand>
</feature>